<evidence type="ECO:0000255" key="1">
    <source>
        <dbReference type="HAMAP-Rule" id="MF_00453"/>
    </source>
</evidence>
<reference key="1">
    <citation type="journal article" date="2002" name="Nat. Genet.">
        <title>Genome sequence of the endocellular obligate symbiont of tsetse flies, Wigglesworthia glossinidia.</title>
        <authorList>
            <person name="Akman L."/>
            <person name="Yamashita A."/>
            <person name="Watanabe H."/>
            <person name="Oshima K."/>
            <person name="Shiba T."/>
            <person name="Hattori M."/>
            <person name="Aksoy S."/>
        </authorList>
    </citation>
    <scope>NUCLEOTIDE SEQUENCE [LARGE SCALE GENOMIC DNA]</scope>
</reference>
<feature type="chain" id="PRO_0000203858" description="Phosphoenolpyruvate carboxykinase (ATP)">
    <location>
        <begin position="1"/>
        <end position="541"/>
    </location>
</feature>
<feature type="binding site" evidence="1">
    <location>
        <position position="64"/>
    </location>
    <ligand>
        <name>substrate</name>
    </ligand>
</feature>
<feature type="binding site" evidence="1">
    <location>
        <position position="206"/>
    </location>
    <ligand>
        <name>substrate</name>
    </ligand>
</feature>
<feature type="binding site" evidence="1">
    <location>
        <position position="212"/>
    </location>
    <ligand>
        <name>ATP</name>
        <dbReference type="ChEBI" id="CHEBI:30616"/>
    </ligand>
</feature>
<feature type="binding site" evidence="1">
    <location>
        <position position="212"/>
    </location>
    <ligand>
        <name>Mn(2+)</name>
        <dbReference type="ChEBI" id="CHEBI:29035"/>
    </ligand>
</feature>
<feature type="binding site" evidence="1">
    <location>
        <position position="212"/>
    </location>
    <ligand>
        <name>substrate</name>
    </ligand>
</feature>
<feature type="binding site" evidence="1">
    <location>
        <position position="231"/>
    </location>
    <ligand>
        <name>ATP</name>
        <dbReference type="ChEBI" id="CHEBI:30616"/>
    </ligand>
</feature>
<feature type="binding site" evidence="1">
    <location>
        <position position="231"/>
    </location>
    <ligand>
        <name>Mn(2+)</name>
        <dbReference type="ChEBI" id="CHEBI:29035"/>
    </ligand>
</feature>
<feature type="binding site" evidence="1">
    <location>
        <begin position="247"/>
        <end position="255"/>
    </location>
    <ligand>
        <name>ATP</name>
        <dbReference type="ChEBI" id="CHEBI:30616"/>
    </ligand>
</feature>
<feature type="binding site" evidence="1">
    <location>
        <position position="268"/>
    </location>
    <ligand>
        <name>Mn(2+)</name>
        <dbReference type="ChEBI" id="CHEBI:29035"/>
    </ligand>
</feature>
<feature type="binding site" evidence="1">
    <location>
        <position position="296"/>
    </location>
    <ligand>
        <name>ATP</name>
        <dbReference type="ChEBI" id="CHEBI:30616"/>
    </ligand>
</feature>
<feature type="binding site" evidence="1">
    <location>
        <position position="332"/>
    </location>
    <ligand>
        <name>ATP</name>
        <dbReference type="ChEBI" id="CHEBI:30616"/>
    </ligand>
</feature>
<feature type="binding site" evidence="1">
    <location>
        <position position="332"/>
    </location>
    <ligand>
        <name>substrate</name>
    </ligand>
</feature>
<feature type="binding site" evidence="1">
    <location>
        <position position="454"/>
    </location>
    <ligand>
        <name>ATP</name>
        <dbReference type="ChEBI" id="CHEBI:30616"/>
    </ligand>
</feature>
<comment type="function">
    <text evidence="1">Involved in the gluconeogenesis. Catalyzes the conversion of oxaloacetate (OAA) to phosphoenolpyruvate (PEP) through direct phosphoryl transfer between the nucleoside triphosphate and OAA.</text>
</comment>
<comment type="catalytic activity">
    <reaction evidence="1">
        <text>oxaloacetate + ATP = phosphoenolpyruvate + ADP + CO2</text>
        <dbReference type="Rhea" id="RHEA:18617"/>
        <dbReference type="ChEBI" id="CHEBI:16452"/>
        <dbReference type="ChEBI" id="CHEBI:16526"/>
        <dbReference type="ChEBI" id="CHEBI:30616"/>
        <dbReference type="ChEBI" id="CHEBI:58702"/>
        <dbReference type="ChEBI" id="CHEBI:456216"/>
        <dbReference type="EC" id="4.1.1.49"/>
    </reaction>
</comment>
<comment type="cofactor">
    <cofactor evidence="1">
        <name>Mn(2+)</name>
        <dbReference type="ChEBI" id="CHEBI:29035"/>
    </cofactor>
    <text evidence="1">Binds 1 Mn(2+) ion per subunit.</text>
</comment>
<comment type="pathway">
    <text evidence="1">Carbohydrate biosynthesis; gluconeogenesis.</text>
</comment>
<comment type="subunit">
    <text evidence="1">Monomer.</text>
</comment>
<comment type="subcellular location">
    <subcellularLocation>
        <location evidence="1">Cytoplasm</location>
    </subcellularLocation>
</comment>
<comment type="similarity">
    <text evidence="1">Belongs to the phosphoenolpyruvate carboxykinase (ATP) family.</text>
</comment>
<accession>Q8D1X9</accession>
<keyword id="KW-0067">ATP-binding</keyword>
<keyword id="KW-0963">Cytoplasm</keyword>
<keyword id="KW-0210">Decarboxylase</keyword>
<keyword id="KW-0312">Gluconeogenesis</keyword>
<keyword id="KW-0456">Lyase</keyword>
<keyword id="KW-0464">Manganese</keyword>
<keyword id="KW-0479">Metal-binding</keyword>
<keyword id="KW-0547">Nucleotide-binding</keyword>
<keyword id="KW-1185">Reference proteome</keyword>
<protein>
    <recommendedName>
        <fullName evidence="1">Phosphoenolpyruvate carboxykinase (ATP)</fullName>
        <shortName evidence="1">PCK</shortName>
        <shortName evidence="1">PEP carboxykinase</shortName>
        <shortName evidence="1">PEPCK</shortName>
        <ecNumber evidence="1">4.1.1.49</ecNumber>
    </recommendedName>
</protein>
<dbReference type="EC" id="4.1.1.49" evidence="1"/>
<dbReference type="EMBL" id="BA000021">
    <property type="protein sequence ID" value="BAC24723.1"/>
    <property type="molecule type" value="Genomic_DNA"/>
</dbReference>
<dbReference type="SMR" id="Q8D1X9"/>
<dbReference type="STRING" id="36870.gene:10369086"/>
<dbReference type="KEGG" id="wbr:pckA"/>
<dbReference type="eggNOG" id="COG1866">
    <property type="taxonomic scope" value="Bacteria"/>
</dbReference>
<dbReference type="HOGENOM" id="CLU_018247_0_1_6"/>
<dbReference type="OrthoDB" id="9806325at2"/>
<dbReference type="UniPathway" id="UPA00138"/>
<dbReference type="Proteomes" id="UP000000562">
    <property type="component" value="Chromosome"/>
</dbReference>
<dbReference type="GO" id="GO:0005829">
    <property type="term" value="C:cytosol"/>
    <property type="evidence" value="ECO:0007669"/>
    <property type="project" value="TreeGrafter"/>
</dbReference>
<dbReference type="GO" id="GO:0005524">
    <property type="term" value="F:ATP binding"/>
    <property type="evidence" value="ECO:0007669"/>
    <property type="project" value="UniProtKB-UniRule"/>
</dbReference>
<dbReference type="GO" id="GO:0046872">
    <property type="term" value="F:metal ion binding"/>
    <property type="evidence" value="ECO:0007669"/>
    <property type="project" value="UniProtKB-KW"/>
</dbReference>
<dbReference type="GO" id="GO:0004612">
    <property type="term" value="F:phosphoenolpyruvate carboxykinase (ATP) activity"/>
    <property type="evidence" value="ECO:0007669"/>
    <property type="project" value="UniProtKB-UniRule"/>
</dbReference>
<dbReference type="GO" id="GO:0006094">
    <property type="term" value="P:gluconeogenesis"/>
    <property type="evidence" value="ECO:0007669"/>
    <property type="project" value="UniProtKB-UniRule"/>
</dbReference>
<dbReference type="FunFam" id="3.40.449.10:FF:000001">
    <property type="entry name" value="Phosphoenolpyruvate carboxykinase (ATP)"/>
    <property type="match status" value="1"/>
</dbReference>
<dbReference type="Gene3D" id="3.90.228.20">
    <property type="match status" value="1"/>
</dbReference>
<dbReference type="Gene3D" id="3.40.449.10">
    <property type="entry name" value="Phosphoenolpyruvate Carboxykinase, domain 1"/>
    <property type="match status" value="1"/>
</dbReference>
<dbReference type="Gene3D" id="2.170.8.10">
    <property type="entry name" value="Phosphoenolpyruvate Carboxykinase, domain 2"/>
    <property type="match status" value="1"/>
</dbReference>
<dbReference type="HAMAP" id="MF_00453">
    <property type="entry name" value="PEPCK_ATP"/>
    <property type="match status" value="1"/>
</dbReference>
<dbReference type="InterPro" id="IPR001272">
    <property type="entry name" value="PEP_carboxykinase_ATP"/>
</dbReference>
<dbReference type="InterPro" id="IPR013035">
    <property type="entry name" value="PEP_carboxykinase_C"/>
</dbReference>
<dbReference type="InterPro" id="IPR008210">
    <property type="entry name" value="PEP_carboxykinase_N"/>
</dbReference>
<dbReference type="InterPro" id="IPR015994">
    <property type="entry name" value="PEPCK_ATP_CS"/>
</dbReference>
<dbReference type="NCBIfam" id="TIGR00224">
    <property type="entry name" value="pckA"/>
    <property type="match status" value="1"/>
</dbReference>
<dbReference type="NCBIfam" id="NF006819">
    <property type="entry name" value="PRK09344.1-1"/>
    <property type="match status" value="1"/>
</dbReference>
<dbReference type="NCBIfam" id="NF006820">
    <property type="entry name" value="PRK09344.1-2"/>
    <property type="match status" value="1"/>
</dbReference>
<dbReference type="NCBIfam" id="NF006821">
    <property type="entry name" value="PRK09344.1-3"/>
    <property type="match status" value="1"/>
</dbReference>
<dbReference type="PANTHER" id="PTHR30031:SF0">
    <property type="entry name" value="PHOSPHOENOLPYRUVATE CARBOXYKINASE (ATP)"/>
    <property type="match status" value="1"/>
</dbReference>
<dbReference type="PANTHER" id="PTHR30031">
    <property type="entry name" value="PHOSPHOENOLPYRUVATE CARBOXYKINASE ATP"/>
    <property type="match status" value="1"/>
</dbReference>
<dbReference type="Pfam" id="PF01293">
    <property type="entry name" value="PEPCK_ATP"/>
    <property type="match status" value="1"/>
</dbReference>
<dbReference type="PIRSF" id="PIRSF006294">
    <property type="entry name" value="PEP_crbxkin"/>
    <property type="match status" value="1"/>
</dbReference>
<dbReference type="SUPFAM" id="SSF68923">
    <property type="entry name" value="PEP carboxykinase N-terminal domain"/>
    <property type="match status" value="1"/>
</dbReference>
<dbReference type="SUPFAM" id="SSF53795">
    <property type="entry name" value="PEP carboxykinase-like"/>
    <property type="match status" value="1"/>
</dbReference>
<dbReference type="PROSITE" id="PS00532">
    <property type="entry name" value="PEPCK_ATP"/>
    <property type="match status" value="1"/>
</dbReference>
<sequence>MKNKENILITLNQVGIEQYSNIIYNPNYDTLFKEETNKNLKGLERCILTKLQAIAVDTGKFTGRSPKDKYYVRDEKTKNIIWWSDDNNHKSNNHPINNETWKDLKKLIANNLNNKKLFVIDAFCGANKKNRLKVRFITDIAWQAHFFKNMFIEPIEQELNKFLQDFTVFSVPKAINKKWKDHKLNSENFIAINLTENTLLIGGTWYGGEIKKGLFSVMNYILPLKNIASMHCSANEGFKKDVALFFGLSGTGKTTLSTDSKRYLIGDDEHGWCKDGVFNFEGGCYAKTINLSEEKEPEIFNAIKKNAILENVMVLKDSNINFFDGTKTENSRVSYPINHIKNIVKPISQSGHPKNIIFLTADAFGVFPFVSKLSYFQGQYYFLSGFTSKLSGTERGIIDPEPTFSSCFGEAFLSLHPTVYAKILLRYIKYYNSKIFLVNTGWNGKRERYSLEYTRSIINAILDDKIEFIDENYIPIFNLKIPKKIEGVPDLFLDPRNFFSSNEEWIKQATILSKKFIKNFKKFSHTKLGKKLIKFEPKINF</sequence>
<name>PCKA_WIGBR</name>
<gene>
    <name evidence="1" type="primary">pckA</name>
    <name type="ordered locus">WIGBR5770</name>
</gene>
<proteinExistence type="inferred from homology"/>
<organism>
    <name type="scientific">Wigglesworthia glossinidia brevipalpis</name>
    <dbReference type="NCBI Taxonomy" id="36870"/>
    <lineage>
        <taxon>Bacteria</taxon>
        <taxon>Pseudomonadati</taxon>
        <taxon>Pseudomonadota</taxon>
        <taxon>Gammaproteobacteria</taxon>
        <taxon>Enterobacterales</taxon>
        <taxon>Erwiniaceae</taxon>
        <taxon>Wigglesworthia</taxon>
    </lineage>
</organism>